<gene>
    <name type="primary">Hsp70Bb</name>
    <name type="ORF">CG31359</name>
</gene>
<sequence length="641" mass="70195">MPAIGIDLGTTYSCVGVYQHGKVEIIANDQGNRTTPSYVAFTDSERLIGDPAKNQVAMNPRNTVFDAKRLIGRKYDDPKIAEDMKHWPFKVVSDGGKPKIGVEYKGESKRFAPEEISSMVLTKMKETAEAYLGESITDAVITVPAYFNDSQRQATKDAGHIAGLNVLRIINEPTAAALAYGLDKNLKGERNVLIFDLGGGTFDVSILTIDEGSLFEVRSTAGDTHLGGEDFDNRLVTHLAEEFKRKYKKDLRSNPRALRRLRTAAERAKRTLSSSTEATIEIDALFEGQDFYTKVSRARFEELCADLFRNTLQPVEKALNDAKMDKGQIHDIVLVGGSTRIPKVQSLLQEFFHGKNLNLSINPDEAVAYGAAVQAAILSGDQSGKIQDVLLVDVAPLSLGIETAGGVMTKLIERNCRIPCKQTKTFSTYSDNQPGVSIQVYEGERAMTKDNNALGTFDLSGIPPAPRGVPQIEVTFDLDANGILNVSAKEMSTGKAKNITIKNDKGRLSQAEIDRMVNEAEKYADEDEKHRQRITSRNALESYVFNVKQSVEQAPAGKLDEADKNSVLDKCNETIRWLDSNTTAEKEEFDHKMEELTRHCSPIMTKMHQQGAGAAGGPGANCGQQAGGFGGYSGPTVEEVD</sequence>
<evidence type="ECO:0000256" key="1">
    <source>
        <dbReference type="SAM" id="MobiDB-lite"/>
    </source>
</evidence>
<evidence type="ECO:0000269" key="2">
    <source>
    </source>
</evidence>
<evidence type="ECO:0000269" key="3">
    <source>
    </source>
</evidence>
<evidence type="ECO:0000305" key="4"/>
<comment type="function">
    <text evidence="3">Stress-response chaperone protein that prevents toxic aggregation of proteins.</text>
</comment>
<comment type="subunit">
    <text evidence="2">Forms a complex with Hsp83/Hsp90 and Dpit47.</text>
</comment>
<comment type="induction">
    <text evidence="3">Heat shock induces the synthesis of seven proteins at five otherwise inactive sites in the polytene chromosomes of fruit fly larvae. Two separate sites, producing two and three copies, respectively, code for the 70 kDa protein. Expression is induced by proteotoxic stress caused by toxic protein aggregation, for example by overexpressed Atx-1/ataxin-1 (PubMed:18344983).</text>
</comment>
<comment type="miscellaneous">
    <text evidence="4">There are 5 or 6 copies of the gene encoding this protein at two separate loci, 2 copies at chromosome locus 87A7 in reverse orientation (Hsp70Aa and Hsp70Ab) at locus 87A7, and 3 or 4 copies (depending on strain) at locus 87C1. Most strains have three copies at chromosome locus 87C1; two tandemly repeated Hsp70 genes (Hsp70Bb and Hsp70Bc) and one in reverse orientation (Hsp70Ba). Some strains, including that sequenced in the Drosophila genome project have an additional copy making three tandemly repeated Hsp70 genes (Hsp70Bb, Hsp70Bbb and Hsp70Bc).</text>
</comment>
<comment type="similarity">
    <text evidence="4">Belongs to the heat shock protein 70 family.</text>
</comment>
<accession>Q9BIS2</accession>
<accession>B0BNN7</accession>
<accession>P02824</accession>
<accession>Q53XF0</accession>
<accession>Q5I7H2</accession>
<accession>Q5I7H4</accession>
<accession>Q5I7H6</accession>
<accession>Q5I7H8</accession>
<accession>Q5I7I3</accession>
<accession>Q5I7I6</accession>
<accession>Q5I7I8</accession>
<accession>Q9BIS1</accession>
<accession>Q9I7J6</accession>
<keyword id="KW-0067">ATP-binding</keyword>
<keyword id="KW-0547">Nucleotide-binding</keyword>
<keyword id="KW-1185">Reference proteome</keyword>
<keyword id="KW-0346">Stress response</keyword>
<protein>
    <recommendedName>
        <fullName>Major heat shock 70 kDa protein Bb</fullName>
        <shortName>Heat shock protein 70Bb</shortName>
    </recommendedName>
    <alternativeName>
        <fullName>HSP70-87C1</fullName>
    </alternativeName>
</protein>
<proteinExistence type="evidence at protein level"/>
<name>HSP73_DROME</name>
<organism>
    <name type="scientific">Drosophila melanogaster</name>
    <name type="common">Fruit fly</name>
    <dbReference type="NCBI Taxonomy" id="7227"/>
    <lineage>
        <taxon>Eukaryota</taxon>
        <taxon>Metazoa</taxon>
        <taxon>Ecdysozoa</taxon>
        <taxon>Arthropoda</taxon>
        <taxon>Hexapoda</taxon>
        <taxon>Insecta</taxon>
        <taxon>Pterygota</taxon>
        <taxon>Neoptera</taxon>
        <taxon>Endopterygota</taxon>
        <taxon>Diptera</taxon>
        <taxon>Brachycera</taxon>
        <taxon>Muscomorpha</taxon>
        <taxon>Ephydroidea</taxon>
        <taxon>Drosophilidae</taxon>
        <taxon>Drosophila</taxon>
        <taxon>Sophophora</taxon>
    </lineage>
</organism>
<dbReference type="EMBL" id="J01104">
    <property type="protein sequence ID" value="AAD15226.1"/>
    <property type="molecule type" value="Genomic_DNA"/>
</dbReference>
<dbReference type="EMBL" id="AF295951">
    <property type="protein sequence ID" value="AAG26905.1"/>
    <property type="molecule type" value="Genomic_DNA"/>
</dbReference>
<dbReference type="EMBL" id="AF295952">
    <property type="protein sequence ID" value="AAG26906.1"/>
    <property type="molecule type" value="Genomic_DNA"/>
</dbReference>
<dbReference type="EMBL" id="AF295953">
    <property type="protein sequence ID" value="AAG26907.1"/>
    <property type="molecule type" value="Genomic_DNA"/>
</dbReference>
<dbReference type="EMBL" id="AF295954">
    <property type="protein sequence ID" value="AAG26908.1"/>
    <property type="molecule type" value="Genomic_DNA"/>
</dbReference>
<dbReference type="EMBL" id="AF295955">
    <property type="protein sequence ID" value="AAG26909.1"/>
    <property type="molecule type" value="Genomic_DNA"/>
</dbReference>
<dbReference type="EMBL" id="AF295956">
    <property type="protein sequence ID" value="AAG26910.1"/>
    <property type="molecule type" value="Genomic_DNA"/>
</dbReference>
<dbReference type="EMBL" id="AF295957">
    <property type="protein sequence ID" value="AAG26911.1"/>
    <property type="molecule type" value="Genomic_DNA"/>
</dbReference>
<dbReference type="EMBL" id="AF350476">
    <property type="protein sequence ID" value="AAK30233.1"/>
    <property type="molecule type" value="Genomic_DNA"/>
</dbReference>
<dbReference type="EMBL" id="AF350477">
    <property type="protein sequence ID" value="AAK30234.1"/>
    <property type="molecule type" value="Genomic_DNA"/>
</dbReference>
<dbReference type="EMBL" id="AF350478">
    <property type="protein sequence ID" value="AAK30235.1"/>
    <property type="molecule type" value="Genomic_DNA"/>
</dbReference>
<dbReference type="EMBL" id="AF350479">
    <property type="protein sequence ID" value="AAK30236.1"/>
    <property type="molecule type" value="Genomic_DNA"/>
</dbReference>
<dbReference type="EMBL" id="AF350480">
    <property type="protein sequence ID" value="AAK30237.1"/>
    <property type="molecule type" value="Genomic_DNA"/>
</dbReference>
<dbReference type="EMBL" id="AF350481">
    <property type="protein sequence ID" value="AAK30238.1"/>
    <property type="molecule type" value="Genomic_DNA"/>
</dbReference>
<dbReference type="EMBL" id="AF350482">
    <property type="protein sequence ID" value="AAK30239.1"/>
    <property type="molecule type" value="Genomic_DNA"/>
</dbReference>
<dbReference type="EMBL" id="AF350483">
    <property type="protein sequence ID" value="AAK30240.1"/>
    <property type="molecule type" value="Genomic_DNA"/>
</dbReference>
<dbReference type="EMBL" id="AE014297">
    <property type="protein sequence ID" value="AAN13546.1"/>
    <property type="molecule type" value="Genomic_DNA"/>
</dbReference>
<dbReference type="EMBL" id="BT011058">
    <property type="protein sequence ID" value="AAR31129.1"/>
    <property type="molecule type" value="mRNA"/>
</dbReference>
<dbReference type="EMBL" id="BT011379">
    <property type="protein sequence ID" value="AAR96171.1"/>
    <property type="molecule type" value="mRNA"/>
</dbReference>
<dbReference type="EMBL" id="BT031349">
    <property type="protein sequence ID" value="ABY76186.1"/>
    <property type="molecule type" value="mRNA"/>
</dbReference>
<dbReference type="EMBL" id="AY846848">
    <property type="protein sequence ID" value="AAW34339.1"/>
    <property type="molecule type" value="Genomic_DNA"/>
</dbReference>
<dbReference type="EMBL" id="AY846849">
    <property type="protein sequence ID" value="AAW34340.1"/>
    <property type="molecule type" value="Genomic_DNA"/>
</dbReference>
<dbReference type="EMBL" id="AY846850">
    <property type="protein sequence ID" value="AAW34341.1"/>
    <property type="molecule type" value="Genomic_DNA"/>
</dbReference>
<dbReference type="EMBL" id="AY846851">
    <property type="protein sequence ID" value="AAW34342.1"/>
    <property type="molecule type" value="Genomic_DNA"/>
</dbReference>
<dbReference type="EMBL" id="AY846852">
    <property type="protein sequence ID" value="AAW34343.1"/>
    <property type="molecule type" value="Genomic_DNA"/>
</dbReference>
<dbReference type="EMBL" id="AY846853">
    <property type="protein sequence ID" value="AAW34344.1"/>
    <property type="molecule type" value="Genomic_DNA"/>
</dbReference>
<dbReference type="EMBL" id="AY846854">
    <property type="protein sequence ID" value="AAW34345.1"/>
    <property type="molecule type" value="Genomic_DNA"/>
</dbReference>
<dbReference type="EMBL" id="AY846855">
    <property type="protein sequence ID" value="AAW34346.1"/>
    <property type="molecule type" value="Genomic_DNA"/>
</dbReference>
<dbReference type="EMBL" id="AY846856">
    <property type="protein sequence ID" value="AAW34347.1"/>
    <property type="molecule type" value="Genomic_DNA"/>
</dbReference>
<dbReference type="EMBL" id="AY846857">
    <property type="protein sequence ID" value="AAW34348.1"/>
    <property type="molecule type" value="Genomic_DNA"/>
</dbReference>
<dbReference type="EMBL" id="AY846858">
    <property type="protein sequence ID" value="AAW34349.1"/>
    <property type="molecule type" value="Genomic_DNA"/>
</dbReference>
<dbReference type="EMBL" id="AY846859">
    <property type="protein sequence ID" value="AAW34350.1"/>
    <property type="molecule type" value="Genomic_DNA"/>
</dbReference>
<dbReference type="EMBL" id="AY846860">
    <property type="protein sequence ID" value="AAW34351.1"/>
    <property type="molecule type" value="Genomic_DNA"/>
</dbReference>
<dbReference type="EMBL" id="AY846861">
    <property type="protein sequence ID" value="AAW34352.1"/>
    <property type="molecule type" value="Genomic_DNA"/>
</dbReference>
<dbReference type="EMBL" id="AY846862">
    <property type="protein sequence ID" value="AAW34353.1"/>
    <property type="molecule type" value="Genomic_DNA"/>
</dbReference>
<dbReference type="EMBL" id="AY846863">
    <property type="protein sequence ID" value="AAW34354.1"/>
    <property type="molecule type" value="Genomic_DNA"/>
</dbReference>
<dbReference type="EMBL" id="AY846864">
    <property type="protein sequence ID" value="AAW34355.1"/>
    <property type="molecule type" value="Genomic_DNA"/>
</dbReference>
<dbReference type="EMBL" id="AY846865">
    <property type="protein sequence ID" value="AAW34356.1"/>
    <property type="molecule type" value="Genomic_DNA"/>
</dbReference>
<dbReference type="EMBL" id="AY370940">
    <property type="protein sequence ID" value="AAQ75092.1"/>
    <property type="molecule type" value="Genomic_DNA"/>
</dbReference>
<dbReference type="RefSeq" id="NP_524927.2">
    <property type="nucleotide sequence ID" value="NM_080188.3"/>
</dbReference>
<dbReference type="SMR" id="Q9BIS2"/>
<dbReference type="BioGRID" id="71512">
    <property type="interactions" value="47"/>
</dbReference>
<dbReference type="BioGRID" id="71513">
    <property type="interactions" value="47"/>
</dbReference>
<dbReference type="FunCoup" id="Q9BIS2">
    <property type="interactions" value="363"/>
</dbReference>
<dbReference type="IntAct" id="Q9BIS2">
    <property type="interactions" value="19"/>
</dbReference>
<dbReference type="GlyGen" id="Q9BIS2">
    <property type="glycosylation" value="1 site"/>
</dbReference>
<dbReference type="DNASU" id="48583"/>
<dbReference type="EnsemblMetazoa" id="FBtr0082637">
    <property type="protein sequence ID" value="FBpp0082106"/>
    <property type="gene ID" value="FBgn0013278"/>
</dbReference>
<dbReference type="EnsemblMetazoa" id="FBtr0082638">
    <property type="protein sequence ID" value="FBpp0082107"/>
    <property type="gene ID" value="FBgn0013279"/>
</dbReference>
<dbReference type="GeneID" id="48582"/>
<dbReference type="KEGG" id="dme:Dmel_CG31359"/>
<dbReference type="KEGG" id="dme:Dmel_CG6489"/>
<dbReference type="AGR" id="FB:FBgn0013278"/>
<dbReference type="CTD" id="48582"/>
<dbReference type="CTD" id="48583"/>
<dbReference type="FlyBase" id="FBgn0013278">
    <property type="gene designation" value="Hsp70Bb"/>
</dbReference>
<dbReference type="VEuPathDB" id="VectorBase:FBgn0013278"/>
<dbReference type="VEuPathDB" id="VectorBase:FBgn0013279"/>
<dbReference type="GeneTree" id="ENSGT00940000154813"/>
<dbReference type="HOGENOM" id="CLU_005965_3_0_1"/>
<dbReference type="InParanoid" id="Q9BIS2"/>
<dbReference type="OMA" id="KEECEHR"/>
<dbReference type="OrthoDB" id="7877850at2759"/>
<dbReference type="PhylomeDB" id="Q9BIS2"/>
<dbReference type="Reactome" id="R-DME-3371497">
    <property type="pathway name" value="HSP90 chaperone cycle for steroid hormone receptors (SHR) in the presence of ligand"/>
</dbReference>
<dbReference type="SignaLink" id="Q9BIS2"/>
<dbReference type="BioGRID-ORCS" id="48582">
    <property type="hits" value="0 hits in 3 CRISPR screens"/>
</dbReference>
<dbReference type="BioGRID-ORCS" id="48583">
    <property type="hits" value="0 hits in 3 CRISPR screens"/>
</dbReference>
<dbReference type="PRO" id="PR:Q9BIS2"/>
<dbReference type="Proteomes" id="UP000000803">
    <property type="component" value="Chromosome 3R"/>
</dbReference>
<dbReference type="Bgee" id="FBgn0013278">
    <property type="expression patterns" value="Expressed in adult oenocyte (Drosophila) in adult thorax and 185 other cell types or tissues"/>
</dbReference>
<dbReference type="ExpressionAtlas" id="Q9BIS2">
    <property type="expression patterns" value="baseline and differential"/>
</dbReference>
<dbReference type="GO" id="GO:0005737">
    <property type="term" value="C:cytoplasm"/>
    <property type="evidence" value="ECO:0000318"/>
    <property type="project" value="GO_Central"/>
</dbReference>
<dbReference type="GO" id="GO:0005829">
    <property type="term" value="C:cytosol"/>
    <property type="evidence" value="ECO:0000318"/>
    <property type="project" value="GO_Central"/>
</dbReference>
<dbReference type="GO" id="GO:0005634">
    <property type="term" value="C:nucleus"/>
    <property type="evidence" value="ECO:0000318"/>
    <property type="project" value="GO_Central"/>
</dbReference>
<dbReference type="GO" id="GO:0005886">
    <property type="term" value="C:plasma membrane"/>
    <property type="evidence" value="ECO:0000318"/>
    <property type="project" value="GO_Central"/>
</dbReference>
<dbReference type="GO" id="GO:0005524">
    <property type="term" value="F:ATP binding"/>
    <property type="evidence" value="ECO:0007669"/>
    <property type="project" value="UniProtKB-KW"/>
</dbReference>
<dbReference type="GO" id="GO:0016887">
    <property type="term" value="F:ATP hydrolysis activity"/>
    <property type="evidence" value="ECO:0000318"/>
    <property type="project" value="GO_Central"/>
</dbReference>
<dbReference type="GO" id="GO:0140662">
    <property type="term" value="F:ATP-dependent protein folding chaperone"/>
    <property type="evidence" value="ECO:0007669"/>
    <property type="project" value="InterPro"/>
</dbReference>
<dbReference type="GO" id="GO:0031072">
    <property type="term" value="F:heat shock protein binding"/>
    <property type="evidence" value="ECO:0000318"/>
    <property type="project" value="GO_Central"/>
</dbReference>
<dbReference type="GO" id="GO:0044183">
    <property type="term" value="F:protein folding chaperone"/>
    <property type="evidence" value="ECO:0000318"/>
    <property type="project" value="GO_Central"/>
</dbReference>
<dbReference type="GO" id="GO:0051085">
    <property type="term" value="P:chaperone cofactor-dependent protein refolding"/>
    <property type="evidence" value="ECO:0000318"/>
    <property type="project" value="GO_Central"/>
</dbReference>
<dbReference type="GO" id="GO:0035080">
    <property type="term" value="P:heat shock-mediated polytene chromosome puffing"/>
    <property type="evidence" value="ECO:0000315"/>
    <property type="project" value="FlyBase"/>
</dbReference>
<dbReference type="GO" id="GO:0042026">
    <property type="term" value="P:protein refolding"/>
    <property type="evidence" value="ECO:0000318"/>
    <property type="project" value="GO_Central"/>
</dbReference>
<dbReference type="GO" id="GO:0009408">
    <property type="term" value="P:response to heat"/>
    <property type="evidence" value="ECO:0000315"/>
    <property type="project" value="FlyBase"/>
</dbReference>
<dbReference type="GO" id="GO:0001666">
    <property type="term" value="P:response to hypoxia"/>
    <property type="evidence" value="ECO:0000315"/>
    <property type="project" value="FlyBase"/>
</dbReference>
<dbReference type="GO" id="GO:0006986">
    <property type="term" value="P:response to unfolded protein"/>
    <property type="evidence" value="ECO:0000303"/>
    <property type="project" value="UniProtKB"/>
</dbReference>
<dbReference type="CDD" id="cd10233">
    <property type="entry name" value="ASKHA_NBD_HSP70_HSPA1"/>
    <property type="match status" value="1"/>
</dbReference>
<dbReference type="FunFam" id="2.60.34.10:FF:000002">
    <property type="entry name" value="Heat shock 70 kDa"/>
    <property type="match status" value="1"/>
</dbReference>
<dbReference type="FunFam" id="3.90.640.10:FF:000002">
    <property type="entry name" value="Heat shock 70 kDa"/>
    <property type="match status" value="1"/>
</dbReference>
<dbReference type="FunFam" id="3.30.420.40:FF:000172">
    <property type="entry name" value="Heat shock 70 kDa protein"/>
    <property type="match status" value="1"/>
</dbReference>
<dbReference type="FunFam" id="3.30.30.30:FF:000001">
    <property type="entry name" value="heat shock 70 kDa protein-like"/>
    <property type="match status" value="1"/>
</dbReference>
<dbReference type="FunFam" id="1.20.1270.10:FF:000024">
    <property type="entry name" value="Heat shock protein 70"/>
    <property type="match status" value="1"/>
</dbReference>
<dbReference type="FunFam" id="3.30.420.40:FF:000026">
    <property type="entry name" value="Heat shock protein 70"/>
    <property type="match status" value="1"/>
</dbReference>
<dbReference type="Gene3D" id="1.20.1270.10">
    <property type="match status" value="1"/>
</dbReference>
<dbReference type="Gene3D" id="3.30.30.30">
    <property type="match status" value="1"/>
</dbReference>
<dbReference type="Gene3D" id="3.30.420.40">
    <property type="match status" value="2"/>
</dbReference>
<dbReference type="Gene3D" id="3.90.640.10">
    <property type="entry name" value="Actin, Chain A, domain 4"/>
    <property type="match status" value="1"/>
</dbReference>
<dbReference type="Gene3D" id="2.60.34.10">
    <property type="entry name" value="Substrate Binding Domain Of DNAk, Chain A, domain 1"/>
    <property type="match status" value="1"/>
</dbReference>
<dbReference type="InterPro" id="IPR043129">
    <property type="entry name" value="ATPase_NBD"/>
</dbReference>
<dbReference type="InterPro" id="IPR018181">
    <property type="entry name" value="Heat_shock_70_CS"/>
</dbReference>
<dbReference type="InterPro" id="IPR029048">
    <property type="entry name" value="HSP70_C_sf"/>
</dbReference>
<dbReference type="InterPro" id="IPR029047">
    <property type="entry name" value="HSP70_peptide-bd_sf"/>
</dbReference>
<dbReference type="InterPro" id="IPR013126">
    <property type="entry name" value="Hsp_70_fam"/>
</dbReference>
<dbReference type="NCBIfam" id="NF001413">
    <property type="entry name" value="PRK00290.1"/>
    <property type="match status" value="1"/>
</dbReference>
<dbReference type="PANTHER" id="PTHR19375">
    <property type="entry name" value="HEAT SHOCK PROTEIN 70KDA"/>
    <property type="match status" value="1"/>
</dbReference>
<dbReference type="Pfam" id="PF00012">
    <property type="entry name" value="HSP70"/>
    <property type="match status" value="1"/>
</dbReference>
<dbReference type="PRINTS" id="PR00301">
    <property type="entry name" value="HEATSHOCK70"/>
</dbReference>
<dbReference type="SUPFAM" id="SSF53067">
    <property type="entry name" value="Actin-like ATPase domain"/>
    <property type="match status" value="2"/>
</dbReference>
<dbReference type="SUPFAM" id="SSF100934">
    <property type="entry name" value="Heat shock protein 70kD (HSP70), C-terminal subdomain"/>
    <property type="match status" value="1"/>
</dbReference>
<dbReference type="SUPFAM" id="SSF100920">
    <property type="entry name" value="Heat shock protein 70kD (HSP70), peptide-binding domain"/>
    <property type="match status" value="1"/>
</dbReference>
<dbReference type="PROSITE" id="PS00297">
    <property type="entry name" value="HSP70_1"/>
    <property type="match status" value="1"/>
</dbReference>
<dbReference type="PROSITE" id="PS00329">
    <property type="entry name" value="HSP70_2"/>
    <property type="match status" value="1"/>
</dbReference>
<dbReference type="PROSITE" id="PS01036">
    <property type="entry name" value="HSP70_3"/>
    <property type="match status" value="1"/>
</dbReference>
<reference key="1">
    <citation type="journal article" date="1980" name="Cell">
        <title>Sequence of three copies of the gene for the major Drosophila heat shock induced protein and their flanking regions.</title>
        <authorList>
            <person name="Ingolia T.D."/>
            <person name="Craig E.A."/>
            <person name="McCarthy B.J."/>
        </authorList>
    </citation>
    <scope>NUCLEOTIDE SEQUENCE [GENOMIC DNA]</scope>
</reference>
<reference key="2">
    <citation type="journal article" date="2002" name="J. Mol. Evol.">
        <title>Rapid concerted evolution via gene conversion at the Drosophila hsp70 genes.</title>
        <authorList>
            <person name="Bettencourt B.R."/>
            <person name="Feder M.E."/>
        </authorList>
    </citation>
    <scope>NUCLEOTIDE SEQUENCE [GENOMIC DNA]</scope>
    <source>
        <strain>3CPA126</strain>
        <strain>3CPA2</strain>
        <strain>3CPA35</strain>
        <strain>3CPA43</strain>
        <strain>3CPA47</strain>
        <strain>3CPA61</strain>
        <strain>3CPA81</strain>
        <strain>3CPA86</strain>
        <strain>AUS</strain>
        <strain>B25</strain>
        <strain>B28</strain>
        <strain>FrV3-1</strain>
        <strain>QD18</strain>
        <strain>Z(H)1</strain>
        <strain>ZZ30</strain>
    </source>
</reference>
<reference key="3">
    <citation type="journal article" date="2000" name="Science">
        <title>The genome sequence of Drosophila melanogaster.</title>
        <authorList>
            <person name="Adams M.D."/>
            <person name="Celniker S.E."/>
            <person name="Holt R.A."/>
            <person name="Evans C.A."/>
            <person name="Gocayne J.D."/>
            <person name="Amanatides P.G."/>
            <person name="Scherer S.E."/>
            <person name="Li P.W."/>
            <person name="Hoskins R.A."/>
            <person name="Galle R.F."/>
            <person name="George R.A."/>
            <person name="Lewis S.E."/>
            <person name="Richards S."/>
            <person name="Ashburner M."/>
            <person name="Henderson S.N."/>
            <person name="Sutton G.G."/>
            <person name="Wortman J.R."/>
            <person name="Yandell M.D."/>
            <person name="Zhang Q."/>
            <person name="Chen L.X."/>
            <person name="Brandon R.C."/>
            <person name="Rogers Y.-H.C."/>
            <person name="Blazej R.G."/>
            <person name="Champe M."/>
            <person name="Pfeiffer B.D."/>
            <person name="Wan K.H."/>
            <person name="Doyle C."/>
            <person name="Baxter E.G."/>
            <person name="Helt G."/>
            <person name="Nelson C.R."/>
            <person name="Miklos G.L.G."/>
            <person name="Abril J.F."/>
            <person name="Agbayani A."/>
            <person name="An H.-J."/>
            <person name="Andrews-Pfannkoch C."/>
            <person name="Baldwin D."/>
            <person name="Ballew R.M."/>
            <person name="Basu A."/>
            <person name="Baxendale J."/>
            <person name="Bayraktaroglu L."/>
            <person name="Beasley E.M."/>
            <person name="Beeson K.Y."/>
            <person name="Benos P.V."/>
            <person name="Berman B.P."/>
            <person name="Bhandari D."/>
            <person name="Bolshakov S."/>
            <person name="Borkova D."/>
            <person name="Botchan M.R."/>
            <person name="Bouck J."/>
            <person name="Brokstein P."/>
            <person name="Brottier P."/>
            <person name="Burtis K.C."/>
            <person name="Busam D.A."/>
            <person name="Butler H."/>
            <person name="Cadieu E."/>
            <person name="Center A."/>
            <person name="Chandra I."/>
            <person name="Cherry J.M."/>
            <person name="Cawley S."/>
            <person name="Dahlke C."/>
            <person name="Davenport L.B."/>
            <person name="Davies P."/>
            <person name="de Pablos B."/>
            <person name="Delcher A."/>
            <person name="Deng Z."/>
            <person name="Mays A.D."/>
            <person name="Dew I."/>
            <person name="Dietz S.M."/>
            <person name="Dodson K."/>
            <person name="Doup L.E."/>
            <person name="Downes M."/>
            <person name="Dugan-Rocha S."/>
            <person name="Dunkov B.C."/>
            <person name="Dunn P."/>
            <person name="Durbin K.J."/>
            <person name="Evangelista C.C."/>
            <person name="Ferraz C."/>
            <person name="Ferriera S."/>
            <person name="Fleischmann W."/>
            <person name="Fosler C."/>
            <person name="Gabrielian A.E."/>
            <person name="Garg N.S."/>
            <person name="Gelbart W.M."/>
            <person name="Glasser K."/>
            <person name="Glodek A."/>
            <person name="Gong F."/>
            <person name="Gorrell J.H."/>
            <person name="Gu Z."/>
            <person name="Guan P."/>
            <person name="Harris M."/>
            <person name="Harris N.L."/>
            <person name="Harvey D.A."/>
            <person name="Heiman T.J."/>
            <person name="Hernandez J.R."/>
            <person name="Houck J."/>
            <person name="Hostin D."/>
            <person name="Houston K.A."/>
            <person name="Howland T.J."/>
            <person name="Wei M.-H."/>
            <person name="Ibegwam C."/>
            <person name="Jalali M."/>
            <person name="Kalush F."/>
            <person name="Karpen G.H."/>
            <person name="Ke Z."/>
            <person name="Kennison J.A."/>
            <person name="Ketchum K.A."/>
            <person name="Kimmel B.E."/>
            <person name="Kodira C.D."/>
            <person name="Kraft C.L."/>
            <person name="Kravitz S."/>
            <person name="Kulp D."/>
            <person name="Lai Z."/>
            <person name="Lasko P."/>
            <person name="Lei Y."/>
            <person name="Levitsky A.A."/>
            <person name="Li J.H."/>
            <person name="Li Z."/>
            <person name="Liang Y."/>
            <person name="Lin X."/>
            <person name="Liu X."/>
            <person name="Mattei B."/>
            <person name="McIntosh T.C."/>
            <person name="McLeod M.P."/>
            <person name="McPherson D."/>
            <person name="Merkulov G."/>
            <person name="Milshina N.V."/>
            <person name="Mobarry C."/>
            <person name="Morris J."/>
            <person name="Moshrefi A."/>
            <person name="Mount S.M."/>
            <person name="Moy M."/>
            <person name="Murphy B."/>
            <person name="Murphy L."/>
            <person name="Muzny D.M."/>
            <person name="Nelson D.L."/>
            <person name="Nelson D.R."/>
            <person name="Nelson K.A."/>
            <person name="Nixon K."/>
            <person name="Nusskern D.R."/>
            <person name="Pacleb J.M."/>
            <person name="Palazzolo M."/>
            <person name="Pittman G.S."/>
            <person name="Pan S."/>
            <person name="Pollard J."/>
            <person name="Puri V."/>
            <person name="Reese M.G."/>
            <person name="Reinert K."/>
            <person name="Remington K."/>
            <person name="Saunders R.D.C."/>
            <person name="Scheeler F."/>
            <person name="Shen H."/>
            <person name="Shue B.C."/>
            <person name="Siden-Kiamos I."/>
            <person name="Simpson M."/>
            <person name="Skupski M.P."/>
            <person name="Smith T.J."/>
            <person name="Spier E."/>
            <person name="Spradling A.C."/>
            <person name="Stapleton M."/>
            <person name="Strong R."/>
            <person name="Sun E."/>
            <person name="Svirskas R."/>
            <person name="Tector C."/>
            <person name="Turner R."/>
            <person name="Venter E."/>
            <person name="Wang A.H."/>
            <person name="Wang X."/>
            <person name="Wang Z.-Y."/>
            <person name="Wassarman D.A."/>
            <person name="Weinstock G.M."/>
            <person name="Weissenbach J."/>
            <person name="Williams S.M."/>
            <person name="Woodage T."/>
            <person name="Worley K.C."/>
            <person name="Wu D."/>
            <person name="Yang S."/>
            <person name="Yao Q.A."/>
            <person name="Ye J."/>
            <person name="Yeh R.-F."/>
            <person name="Zaveri J.S."/>
            <person name="Zhan M."/>
            <person name="Zhang G."/>
            <person name="Zhao Q."/>
            <person name="Zheng L."/>
            <person name="Zheng X.H."/>
            <person name="Zhong F.N."/>
            <person name="Zhong W."/>
            <person name="Zhou X."/>
            <person name="Zhu S.C."/>
            <person name="Zhu X."/>
            <person name="Smith H.O."/>
            <person name="Gibbs R.A."/>
            <person name="Myers E.W."/>
            <person name="Rubin G.M."/>
            <person name="Venter J.C."/>
        </authorList>
    </citation>
    <scope>NUCLEOTIDE SEQUENCE [LARGE SCALE GENOMIC DNA]</scope>
    <source>
        <strain>Berkeley</strain>
    </source>
</reference>
<reference key="4">
    <citation type="journal article" date="2002" name="Genome Biol.">
        <title>Annotation of the Drosophila melanogaster euchromatic genome: a systematic review.</title>
        <authorList>
            <person name="Misra S."/>
            <person name="Crosby M.A."/>
            <person name="Mungall C.J."/>
            <person name="Matthews B.B."/>
            <person name="Campbell K.S."/>
            <person name="Hradecky P."/>
            <person name="Huang Y."/>
            <person name="Kaminker J.S."/>
            <person name="Millburn G.H."/>
            <person name="Prochnik S.E."/>
            <person name="Smith C.D."/>
            <person name="Tupy J.L."/>
            <person name="Whitfield E.J."/>
            <person name="Bayraktaroglu L."/>
            <person name="Berman B.P."/>
            <person name="Bettencourt B.R."/>
            <person name="Celniker S.E."/>
            <person name="de Grey A.D.N.J."/>
            <person name="Drysdale R.A."/>
            <person name="Harris N.L."/>
            <person name="Richter J."/>
            <person name="Russo S."/>
            <person name="Schroeder A.J."/>
            <person name="Shu S.Q."/>
            <person name="Stapleton M."/>
            <person name="Yamada C."/>
            <person name="Ashburner M."/>
            <person name="Gelbart W.M."/>
            <person name="Rubin G.M."/>
            <person name="Lewis S.E."/>
        </authorList>
    </citation>
    <scope>GENOME REANNOTATION</scope>
    <source>
        <strain>Berkeley</strain>
    </source>
</reference>
<reference key="5">
    <citation type="submission" date="2008-01" db="EMBL/GenBank/DDBJ databases">
        <authorList>
            <person name="Stapleton M."/>
            <person name="Brokstein P."/>
            <person name="Hong L."/>
            <person name="Agbayani A."/>
            <person name="Carlson J.W."/>
            <person name="Champe M."/>
            <person name="Chavez C."/>
            <person name="Dorsett V."/>
            <person name="Dresnek D."/>
            <person name="Farfan D."/>
            <person name="Frise E."/>
            <person name="George R.A."/>
            <person name="Gonzalez M."/>
            <person name="Guarin H."/>
            <person name="Kapadia B."/>
            <person name="Kronmiller B."/>
            <person name="Li P.W."/>
            <person name="Liao G."/>
            <person name="Miranda A."/>
            <person name="Mungall C.J."/>
            <person name="Nunoo J."/>
            <person name="Pacleb J.M."/>
            <person name="Paragas V."/>
            <person name="Park S."/>
            <person name="Patel S."/>
            <person name="Phouanenavong S."/>
            <person name="Wan K.H."/>
            <person name="Yu C."/>
            <person name="Lewis S.E."/>
            <person name="Rubin G.M."/>
            <person name="Celniker S.E."/>
        </authorList>
    </citation>
    <scope>NUCLEOTIDE SEQUENCE [LARGE SCALE MRNA]</scope>
    <source>
        <strain>Berkeley</strain>
        <tissue>Larva</tissue>
        <tissue>Pupae</tissue>
    </source>
</reference>
<reference key="6">
    <citation type="journal article" date="2002" name="Curr. Biol.">
        <title>S-element insertions are associated with the evolution of the Hsp70 genes in Drosophila melanogaster.</title>
        <authorList>
            <person name="Maside X."/>
            <person name="Bartolome C."/>
            <person name="Charlesworth B."/>
        </authorList>
    </citation>
    <scope>NUCLEOTIDE SEQUENCE [GENOMIC DNA] OF 1-609</scope>
    <source>
        <strain>IS2</strain>
        <strain>IS25</strain>
        <strain>IS3</strain>
        <strain>IS4</strain>
        <strain>IS5</strain>
        <strain>IS9</strain>
        <strain>Z(S)10</strain>
        <strain>Z(S)11</strain>
        <strain>Z(S)15</strain>
        <strain>Z(S)2</strain>
        <strain>Z(S)24</strain>
        <strain>Z(S)29</strain>
        <strain>Z(S)30</strain>
        <strain>Z(S)30A</strain>
        <strain>Z(S)49</strain>
        <strain>Z(S)53</strain>
        <strain>Z(S)56</strain>
        <strain>Z(S)6</strain>
    </source>
</reference>
<reference key="7">
    <citation type="journal article" date="2005" name="Mol. Biol. Evol.">
        <title>Naturally occurring transposable elements disrupt hsp70 promoter function in Drosophila melanogaster.</title>
        <authorList>
            <person name="Lerman D.N."/>
            <person name="Feder M.E."/>
        </authorList>
    </citation>
    <scope>NUCLEOTIDE SEQUENCE [GENOMIC DNA] OF 1-55</scope>
    <source>
        <strain>Evolution Canyon 2000</strain>
    </source>
</reference>
<reference key="8">
    <citation type="journal article" date="2001" name="J. Cell Sci.">
        <title>The Drosophila Dpit47 protein is a nuclear Hsp90 co-chaperone that interacts with DNA polymerase alpha.</title>
        <authorList>
            <person name="Crevel G."/>
            <person name="Bates H."/>
            <person name="Huikeshoven H."/>
            <person name="Cotterill S."/>
        </authorList>
    </citation>
    <scope>INTERACTION WITH DPIT47 AND HSP83</scope>
</reference>
<reference key="9">
    <citation type="journal article" date="2008" name="Nature">
        <title>NAD synthase NMNAT acts as a chaperone to protect against neurodegeneration.</title>
        <authorList>
            <person name="Zhai R.G."/>
            <person name="Zhang F."/>
            <person name="Hiesinger P.R."/>
            <person name="Cao Y."/>
            <person name="Haueter C.M."/>
            <person name="Bellen H.J."/>
        </authorList>
    </citation>
    <scope>FUNCTION</scope>
    <scope>INDUCTION BY PROTEOTOXIC STRESS</scope>
</reference>
<feature type="chain" id="PRO_0000078333" description="Major heat shock 70 kDa protein Bb">
    <location>
        <begin position="1"/>
        <end position="641"/>
    </location>
</feature>
<feature type="region of interest" description="Disordered" evidence="1">
    <location>
        <begin position="609"/>
        <end position="641"/>
    </location>
</feature>
<feature type="compositionally biased region" description="Gly residues" evidence="1">
    <location>
        <begin position="613"/>
        <end position="633"/>
    </location>
</feature>
<feature type="sequence variant" description="In strain: 3CPA86.">
    <original>D</original>
    <variation>E</variation>
    <location>
        <position position="43"/>
    </location>
</feature>
<feature type="sequence variant" description="In strain: FrV3-1.">
    <original>P</original>
    <variation>S</variation>
    <location>
        <position position="60"/>
    </location>
</feature>
<feature type="sequence variant" description="In Z(S)29.">
    <original>A</original>
    <variation>P</variation>
    <location>
        <position position="67"/>
    </location>
</feature>
<feature type="sequence variant" description="In Z(S)2.">
    <original>I</original>
    <variation>T</variation>
    <location>
        <position position="71"/>
    </location>
</feature>
<feature type="sequence variant" description="In strain: IS2, IS3, IS4, IS5, IS25 and QD18.">
    <original>K</original>
    <variation>N</variation>
    <location>
        <position position="187"/>
    </location>
</feature>
<feature type="sequence variant" description="In strain: ZZ30.">
    <original>F</original>
    <variation>L</variation>
    <location>
        <position position="195"/>
    </location>
</feature>
<feature type="sequence variant" description="In strain: Z(H)1.">
    <original>E</original>
    <variation>D</variation>
    <location>
        <position position="241"/>
    </location>
</feature>
<feature type="sequence variant" description="In strain: Z(H)1.">
    <original>E</original>
    <variation>D</variation>
    <location>
        <position position="350"/>
    </location>
</feature>
<feature type="sequence variant" description="In strain: Z(H)1.">
    <original>S</original>
    <variation>A</variation>
    <location>
        <position position="430"/>
    </location>
</feature>
<feature type="sequence variant" description="In strain: IS4 and IS5.">
    <original>S</original>
    <variation>P</variation>
    <location>
        <position position="437"/>
    </location>
</feature>
<feature type="sequence variant" description="In strain: B28.">
    <original>M</original>
    <variation>I</variation>
    <location>
        <position position="516"/>
    </location>
</feature>
<feature type="sequence variant" description="In strain: B28.">
    <original>A</original>
    <variation>V</variation>
    <location>
        <position position="524"/>
    </location>
</feature>
<feature type="sequence variant" description="In strain: Z(S)24 and Z(S)49.">
    <original>V</original>
    <variation>I</variation>
    <location>
        <position position="544"/>
    </location>
</feature>
<feature type="sequence variant" description="In strain: 3CPA126.">
    <original>K</original>
    <variation>T</variation>
    <location>
        <position position="606"/>
    </location>
</feature>
<feature type="sequence variant" description="In strain: Z(S)30A.">
    <original>M</original>
    <variation>V</variation>
    <location>
        <position position="607"/>
    </location>
</feature>
<feature type="sequence conflict" description="In Ref. 1; AAD15226." evidence="4" ref="1">
    <original>IAN</original>
    <variation>NAY</variation>
    <location>
        <begin position="26"/>
        <end position="28"/>
    </location>
</feature>
<feature type="sequence conflict" description="In Ref. 1; AAD15226." evidence="4" ref="1">
    <original>IGD</original>
    <variation>NGE</variation>
    <location>
        <begin position="48"/>
        <end position="50"/>
    </location>
</feature>
<feature type="sequence conflict" description="In Ref. 1; AAD15226." evidence="4" ref="1">
    <original>D</original>
    <variation>N</variation>
    <location>
        <position position="306"/>
    </location>
</feature>